<name>UB2V3_CAEEL</name>
<proteinExistence type="evidence at protein level"/>
<keyword id="KW-0966">Cell projection</keyword>
<keyword id="KW-0963">Cytoplasm</keyword>
<keyword id="KW-0539">Nucleus</keyword>
<keyword id="KW-1185">Reference proteome</keyword>
<keyword id="KW-0833">Ubl conjugation pathway</keyword>
<feature type="chain" id="PRO_0000436503" description="Ubiquitin-conjugating enzyme E2 variant 3" evidence="6">
    <location>
        <begin position="1"/>
        <end position="356"/>
    </location>
</feature>
<feature type="domain" description="UBC core" evidence="2">
    <location>
        <begin position="169"/>
        <end position="324"/>
    </location>
</feature>
<feature type="region of interest" description="Disordered" evidence="3">
    <location>
        <begin position="1"/>
        <end position="83"/>
    </location>
</feature>
<feature type="compositionally biased region" description="Polar residues" evidence="3">
    <location>
        <begin position="18"/>
        <end position="32"/>
    </location>
</feature>
<feature type="compositionally biased region" description="Basic and acidic residues" evidence="3">
    <location>
        <begin position="63"/>
        <end position="76"/>
    </location>
</feature>
<sequence length="356" mass="41417">MSDQPGTSRPPLRAEPTPTKTATRRRARPIAIPSDETPRNEVTFLRPSEVPQRKPLPEYREPQPRKTVPKNVPLEDLHNYHREECLNVSIPHFINTEDLIKESQRVNGLISFRSTNFVDPSVILKEIKKKEEETVTLMDNDKNSIIDIVGDGINYEKLKKVEKSLCQIDIITEFMNRSRHLQGKKVNGCIMRIDETKQLLFHVIIDGPVGSIYEGGTFFADINIQPYQNHSLIPRVCFHTFIFHPNLGKYGNWDMRGIQWERRSNLEVLYNFIVEGMRNVKYDIERRNLAQLEDMSQPNISRLAKEDWPKFERTAREFVMKMAGGTINGRKTIFAETKKRRRQDFLDEDIDVIGIS</sequence>
<organism evidence="8">
    <name type="scientific">Caenorhabditis elegans</name>
    <dbReference type="NCBI Taxonomy" id="6239"/>
    <lineage>
        <taxon>Eukaryota</taxon>
        <taxon>Metazoa</taxon>
        <taxon>Ecdysozoa</taxon>
        <taxon>Nematoda</taxon>
        <taxon>Chromadorea</taxon>
        <taxon>Rhabditida</taxon>
        <taxon>Rhabditina</taxon>
        <taxon>Rhabditomorpha</taxon>
        <taxon>Rhabditoidea</taxon>
        <taxon>Rhabditidae</taxon>
        <taxon>Peloderinae</taxon>
        <taxon>Caenorhabditis</taxon>
    </lineage>
</organism>
<comment type="function">
    <text evidence="1 4 5">Possible negative regulator of polyubiquitination (By similarity). May modulate the activity of the p38 MAP kinase pnk-3 (PubMed:20592265). May have a role in axon termination and synaptic transmission at motor and mechanosensory neurons (PubMed:20592265). Plays a role in intraflagellar transport in cilia and cilium length regulation (PubMed:26657059).</text>
</comment>
<comment type="subunit">
    <text evidence="4">May interact with pmk-3.</text>
</comment>
<comment type="subcellular location">
    <subcellularLocation>
        <location evidence="5">Nucleus</location>
    </subcellularLocation>
    <subcellularLocation>
        <location evidence="5">Cytoplasm</location>
    </subcellularLocation>
    <subcellularLocation>
        <location evidence="5">Cell projection</location>
        <location evidence="5">Dendrite</location>
    </subcellularLocation>
    <subcellularLocation>
        <location evidence="5">Cell projection</location>
        <location evidence="5">Axon</location>
    </subcellularLocation>
    <subcellularLocation>
        <location evidence="5">Cell projection</location>
        <location evidence="5">Cilium</location>
    </subcellularLocation>
</comment>
<comment type="tissue specificity">
    <text evidence="4">Expressed ubiquitously.</text>
</comment>
<comment type="similarity">
    <text evidence="2">Belongs to the ubiquitin-conjugating enzyme family.</text>
</comment>
<comment type="caution">
    <text evidence="6">Lacks the active site cysteine required for interaction with ubiquitin.</text>
</comment>
<evidence type="ECO:0000250" key="1">
    <source>
        <dbReference type="UniProtKB" id="Q8IX04"/>
    </source>
</evidence>
<evidence type="ECO:0000255" key="2">
    <source>
        <dbReference type="PROSITE-ProRule" id="PRU00388"/>
    </source>
</evidence>
<evidence type="ECO:0000256" key="3">
    <source>
        <dbReference type="SAM" id="MobiDB-lite"/>
    </source>
</evidence>
<evidence type="ECO:0000269" key="4">
    <source>
    </source>
</evidence>
<evidence type="ECO:0000269" key="5">
    <source>
    </source>
</evidence>
<evidence type="ECO:0000305" key="6"/>
<evidence type="ECO:0000312" key="7">
    <source>
        <dbReference type="EMBL" id="CAB04202.2"/>
    </source>
</evidence>
<evidence type="ECO:0000312" key="8">
    <source>
        <dbReference type="Proteomes" id="UP000001940"/>
    </source>
</evidence>
<evidence type="ECO:0000312" key="9">
    <source>
        <dbReference type="WormBase" id="F26H9.7a"/>
    </source>
</evidence>
<protein>
    <recommendedName>
        <fullName evidence="9">Ubiquitin-conjugating enzyme E2 variant 3</fullName>
    </recommendedName>
</protein>
<accession>P91853</accession>
<dbReference type="EMBL" id="BX284601">
    <property type="protein sequence ID" value="CAB04202.2"/>
    <property type="molecule type" value="Genomic_DNA"/>
</dbReference>
<dbReference type="RefSeq" id="NP_492482.2">
    <property type="nucleotide sequence ID" value="NM_060081.2"/>
</dbReference>
<dbReference type="SMR" id="P91853"/>
<dbReference type="FunCoup" id="P91853">
    <property type="interactions" value="1588"/>
</dbReference>
<dbReference type="STRING" id="6239.F26H9.7.1"/>
<dbReference type="PaxDb" id="6239-F26H9.7"/>
<dbReference type="EnsemblMetazoa" id="F26H9.7a.1">
    <property type="protein sequence ID" value="F26H9.7a.1"/>
    <property type="gene ID" value="WBGene00006732"/>
</dbReference>
<dbReference type="UCSC" id="F26H9.7">
    <property type="organism name" value="c. elegans"/>
</dbReference>
<dbReference type="AGR" id="WB:WBGene00006732"/>
<dbReference type="WormBase" id="F26H9.7a">
    <property type="protein sequence ID" value="CE42102"/>
    <property type="gene ID" value="WBGene00006732"/>
    <property type="gene designation" value="uev-3"/>
</dbReference>
<dbReference type="eggNOG" id="KOG0417">
    <property type="taxonomic scope" value="Eukaryota"/>
</dbReference>
<dbReference type="HOGENOM" id="CLU_835680_0_0_1"/>
<dbReference type="InParanoid" id="P91853"/>
<dbReference type="OMA" id="CIMRIDE"/>
<dbReference type="Reactome" id="R-CEL-8866652">
    <property type="pathway name" value="Synthesis of active ubiquitin: roles of E1 and E2 enzymes"/>
</dbReference>
<dbReference type="SignaLink" id="P91853"/>
<dbReference type="PRO" id="PR:P91853"/>
<dbReference type="Proteomes" id="UP000001940">
    <property type="component" value="Chromosome I"/>
</dbReference>
<dbReference type="Bgee" id="WBGene00006732">
    <property type="expression patterns" value="Expressed in germ line (C elegans) and 4 other cell types or tissues"/>
</dbReference>
<dbReference type="ExpressionAtlas" id="P91853">
    <property type="expression patterns" value="baseline and differential"/>
</dbReference>
<dbReference type="GO" id="GO:0030424">
    <property type="term" value="C:axon"/>
    <property type="evidence" value="ECO:0007669"/>
    <property type="project" value="UniProtKB-SubCell"/>
</dbReference>
<dbReference type="GO" id="GO:0005929">
    <property type="term" value="C:cilium"/>
    <property type="evidence" value="ECO:0007669"/>
    <property type="project" value="UniProtKB-SubCell"/>
</dbReference>
<dbReference type="GO" id="GO:0005737">
    <property type="term" value="C:cytoplasm"/>
    <property type="evidence" value="ECO:0007669"/>
    <property type="project" value="UniProtKB-SubCell"/>
</dbReference>
<dbReference type="GO" id="GO:0030425">
    <property type="term" value="C:dendrite"/>
    <property type="evidence" value="ECO:0007669"/>
    <property type="project" value="UniProtKB-SubCell"/>
</dbReference>
<dbReference type="GO" id="GO:0005634">
    <property type="term" value="C:nucleus"/>
    <property type="evidence" value="ECO:0000318"/>
    <property type="project" value="GO_Central"/>
</dbReference>
<dbReference type="GO" id="GO:0061631">
    <property type="term" value="F:ubiquitin conjugating enzyme activity"/>
    <property type="evidence" value="ECO:0000318"/>
    <property type="project" value="GO_Central"/>
</dbReference>
<dbReference type="GO" id="GO:0006974">
    <property type="term" value="P:DNA damage response"/>
    <property type="evidence" value="ECO:0000318"/>
    <property type="project" value="GO_Central"/>
</dbReference>
<dbReference type="GO" id="GO:0000209">
    <property type="term" value="P:protein polyubiquitination"/>
    <property type="evidence" value="ECO:0000318"/>
    <property type="project" value="GO_Central"/>
</dbReference>
<dbReference type="CDD" id="cd00195">
    <property type="entry name" value="UBCc_UEV"/>
    <property type="match status" value="1"/>
</dbReference>
<dbReference type="Gene3D" id="3.10.110.10">
    <property type="entry name" value="Ubiquitin Conjugating Enzyme"/>
    <property type="match status" value="1"/>
</dbReference>
<dbReference type="InterPro" id="IPR000608">
    <property type="entry name" value="UBQ-conjugat_E2_core"/>
</dbReference>
<dbReference type="InterPro" id="IPR016135">
    <property type="entry name" value="UBQ-conjugating_enzyme/RWD"/>
</dbReference>
<dbReference type="Pfam" id="PF00179">
    <property type="entry name" value="UQ_con"/>
    <property type="match status" value="1"/>
</dbReference>
<dbReference type="SMART" id="SM00212">
    <property type="entry name" value="UBCc"/>
    <property type="match status" value="1"/>
</dbReference>
<dbReference type="SUPFAM" id="SSF54495">
    <property type="entry name" value="UBC-like"/>
    <property type="match status" value="1"/>
</dbReference>
<dbReference type="PROSITE" id="PS50127">
    <property type="entry name" value="UBC_2"/>
    <property type="match status" value="1"/>
</dbReference>
<gene>
    <name evidence="9" type="primary">uev-3</name>
    <name evidence="9" type="ORF">F26H9.7</name>
</gene>
<reference evidence="7 8" key="1">
    <citation type="journal article" date="1998" name="Science">
        <title>Genome sequence of the nematode C. elegans: a platform for investigating biology.</title>
        <authorList>
            <consortium name="The C. elegans sequencing consortium"/>
        </authorList>
    </citation>
    <scope>NUCLEOTIDE SEQUENCE [LARGE SCALE GENOMIC DNA]</scope>
    <source>
        <strain evidence="7 8">Bristol N2</strain>
    </source>
</reference>
<reference evidence="6" key="2">
    <citation type="journal article" date="2010" name="Genetics">
        <title>A ubiquitin E2 variant protein acts in axon termination and synaptogenesis in Caenorhabditis elegans.</title>
        <authorList>
            <person name="Trujillo G."/>
            <person name="Nakata K."/>
            <person name="Yan D."/>
            <person name="Maruyama I.N."/>
            <person name="Jin Y."/>
        </authorList>
    </citation>
    <scope>FUNCTION</scope>
    <scope>INTERACTION WITH PMK-3</scope>
    <scope>TISSUE SPECIFICITY</scope>
</reference>
<reference evidence="6" key="3">
    <citation type="journal article" date="2015" name="PLoS Genet.">
        <title>DLK-1/p38 MAP Kinase signaling controls cilium length by regulating RAB-5 mediated endocytosis in Caenorhabditis elegans.</title>
        <authorList>
            <person name="van der Vaart A."/>
            <person name="Rademakers S."/>
            <person name="Jansen G."/>
        </authorList>
    </citation>
    <scope>FUNCTION</scope>
    <scope>SUBCELLULAR LOCATION</scope>
</reference>